<evidence type="ECO:0000255" key="1">
    <source>
        <dbReference type="HAMAP-Rule" id="MF_00254"/>
    </source>
</evidence>
<dbReference type="EC" id="6.1.1.14" evidence="1"/>
<dbReference type="EMBL" id="CP000409">
    <property type="protein sequence ID" value="ABV74005.1"/>
    <property type="molecule type" value="Genomic_DNA"/>
</dbReference>
<dbReference type="RefSeq" id="WP_012149200.1">
    <property type="nucleotide sequence ID" value="NC_009879.1"/>
</dbReference>
<dbReference type="SMR" id="A8F072"/>
<dbReference type="STRING" id="293613.A1E_05445"/>
<dbReference type="KEGG" id="rcm:A1E_05445"/>
<dbReference type="eggNOG" id="COG0752">
    <property type="taxonomic scope" value="Bacteria"/>
</dbReference>
<dbReference type="HOGENOM" id="CLU_057066_1_0_5"/>
<dbReference type="Proteomes" id="UP000007056">
    <property type="component" value="Chromosome"/>
</dbReference>
<dbReference type="GO" id="GO:0005829">
    <property type="term" value="C:cytosol"/>
    <property type="evidence" value="ECO:0007669"/>
    <property type="project" value="TreeGrafter"/>
</dbReference>
<dbReference type="GO" id="GO:0005524">
    <property type="term" value="F:ATP binding"/>
    <property type="evidence" value="ECO:0007669"/>
    <property type="project" value="UniProtKB-UniRule"/>
</dbReference>
<dbReference type="GO" id="GO:0004820">
    <property type="term" value="F:glycine-tRNA ligase activity"/>
    <property type="evidence" value="ECO:0007669"/>
    <property type="project" value="UniProtKB-UniRule"/>
</dbReference>
<dbReference type="GO" id="GO:0006426">
    <property type="term" value="P:glycyl-tRNA aminoacylation"/>
    <property type="evidence" value="ECO:0007669"/>
    <property type="project" value="UniProtKB-UniRule"/>
</dbReference>
<dbReference type="FunFam" id="3.30.930.10:FF:000006">
    <property type="entry name" value="Glycine--tRNA ligase alpha subunit"/>
    <property type="match status" value="1"/>
</dbReference>
<dbReference type="Gene3D" id="3.30.930.10">
    <property type="entry name" value="Bira Bifunctional Protein, Domain 2"/>
    <property type="match status" value="1"/>
</dbReference>
<dbReference type="Gene3D" id="1.20.58.180">
    <property type="entry name" value="Class II aaRS and biotin synthetases, domain 2"/>
    <property type="match status" value="1"/>
</dbReference>
<dbReference type="HAMAP" id="MF_00254">
    <property type="entry name" value="Gly_tRNA_synth_alpha"/>
    <property type="match status" value="1"/>
</dbReference>
<dbReference type="InterPro" id="IPR045864">
    <property type="entry name" value="aa-tRNA-synth_II/BPL/LPL"/>
</dbReference>
<dbReference type="InterPro" id="IPR006194">
    <property type="entry name" value="Gly-tRNA-synth_heterodimer"/>
</dbReference>
<dbReference type="InterPro" id="IPR002310">
    <property type="entry name" value="Gly-tRNA_ligase_asu"/>
</dbReference>
<dbReference type="NCBIfam" id="TIGR00388">
    <property type="entry name" value="glyQ"/>
    <property type="match status" value="1"/>
</dbReference>
<dbReference type="NCBIfam" id="NF006827">
    <property type="entry name" value="PRK09348.1"/>
    <property type="match status" value="1"/>
</dbReference>
<dbReference type="PANTHER" id="PTHR30075:SF2">
    <property type="entry name" value="GLYCINE--TRNA LIGASE, CHLOROPLASTIC_MITOCHONDRIAL 2"/>
    <property type="match status" value="1"/>
</dbReference>
<dbReference type="PANTHER" id="PTHR30075">
    <property type="entry name" value="GLYCYL-TRNA SYNTHETASE"/>
    <property type="match status" value="1"/>
</dbReference>
<dbReference type="Pfam" id="PF02091">
    <property type="entry name" value="tRNA-synt_2e"/>
    <property type="match status" value="1"/>
</dbReference>
<dbReference type="PRINTS" id="PR01044">
    <property type="entry name" value="TRNASYNTHGA"/>
</dbReference>
<dbReference type="SUPFAM" id="SSF55681">
    <property type="entry name" value="Class II aaRS and biotin synthetases"/>
    <property type="match status" value="1"/>
</dbReference>
<dbReference type="PROSITE" id="PS50861">
    <property type="entry name" value="AA_TRNA_LIGASE_II_GLYAB"/>
    <property type="match status" value="1"/>
</dbReference>
<sequence>MKKLSFQQIILTLQNYWQDYGCAILQPYDAHVGAGTFHPATVLRCLGTKPWSVAYVQPSRRPGDSRYGMHPNRMQHYYQFQVILKPSPDNIQDLYLKSLECLGLDLKTHDIRFVEDDWESPTLGAAGLGWEVWCNGMEVSQFTYMQQIGGIECRPVAGEITYGLERLALYIQGVDEVKELDWNGQVGEKALKYGKVDFEAERQFSKYNLELADSEMLVRHFKDSEEQCEWLVKKNVPFAAYDECLKASHAFNQLNALGVISVTERASYVLRVRHLAKICCTKWLEMNE</sequence>
<feature type="chain" id="PRO_1000101221" description="Glycine--tRNA ligase alpha subunit">
    <location>
        <begin position="1"/>
        <end position="288"/>
    </location>
</feature>
<keyword id="KW-0030">Aminoacyl-tRNA synthetase</keyword>
<keyword id="KW-0067">ATP-binding</keyword>
<keyword id="KW-0963">Cytoplasm</keyword>
<keyword id="KW-0436">Ligase</keyword>
<keyword id="KW-0547">Nucleotide-binding</keyword>
<keyword id="KW-0648">Protein biosynthesis</keyword>
<proteinExistence type="inferred from homology"/>
<gene>
    <name evidence="1" type="primary">glyQ</name>
    <name type="ordered locus">A1E_05445</name>
</gene>
<protein>
    <recommendedName>
        <fullName evidence="1">Glycine--tRNA ligase alpha subunit</fullName>
        <ecNumber evidence="1">6.1.1.14</ecNumber>
    </recommendedName>
    <alternativeName>
        <fullName evidence="1">Glycyl-tRNA synthetase alpha subunit</fullName>
        <shortName evidence="1">GlyRS</shortName>
    </alternativeName>
</protein>
<organism>
    <name type="scientific">Rickettsia canadensis (strain McKiel)</name>
    <dbReference type="NCBI Taxonomy" id="293613"/>
    <lineage>
        <taxon>Bacteria</taxon>
        <taxon>Pseudomonadati</taxon>
        <taxon>Pseudomonadota</taxon>
        <taxon>Alphaproteobacteria</taxon>
        <taxon>Rickettsiales</taxon>
        <taxon>Rickettsiaceae</taxon>
        <taxon>Rickettsieae</taxon>
        <taxon>Rickettsia</taxon>
        <taxon>belli group</taxon>
    </lineage>
</organism>
<comment type="catalytic activity">
    <reaction evidence="1">
        <text>tRNA(Gly) + glycine + ATP = glycyl-tRNA(Gly) + AMP + diphosphate</text>
        <dbReference type="Rhea" id="RHEA:16013"/>
        <dbReference type="Rhea" id="RHEA-COMP:9664"/>
        <dbReference type="Rhea" id="RHEA-COMP:9683"/>
        <dbReference type="ChEBI" id="CHEBI:30616"/>
        <dbReference type="ChEBI" id="CHEBI:33019"/>
        <dbReference type="ChEBI" id="CHEBI:57305"/>
        <dbReference type="ChEBI" id="CHEBI:78442"/>
        <dbReference type="ChEBI" id="CHEBI:78522"/>
        <dbReference type="ChEBI" id="CHEBI:456215"/>
        <dbReference type="EC" id="6.1.1.14"/>
    </reaction>
</comment>
<comment type="subunit">
    <text evidence="1">Tetramer of two alpha and two beta subunits.</text>
</comment>
<comment type="subcellular location">
    <subcellularLocation>
        <location evidence="1">Cytoplasm</location>
    </subcellularLocation>
</comment>
<comment type="similarity">
    <text evidence="1">Belongs to the class-II aminoacyl-tRNA synthetase family.</text>
</comment>
<accession>A8F072</accession>
<name>SYGA_RICCK</name>
<reference key="1">
    <citation type="submission" date="2007-09" db="EMBL/GenBank/DDBJ databases">
        <title>Complete genome sequence of Rickettsia canadensis.</title>
        <authorList>
            <person name="Madan A."/>
            <person name="Fahey J."/>
            <person name="Helton E."/>
            <person name="Ketteman M."/>
            <person name="Madan A."/>
            <person name="Rodrigues S."/>
            <person name="Sanchez A."/>
            <person name="Whiting M."/>
            <person name="Dasch G."/>
            <person name="Eremeeva M."/>
        </authorList>
    </citation>
    <scope>NUCLEOTIDE SEQUENCE [LARGE SCALE GENOMIC DNA]</scope>
    <source>
        <strain>McKiel</strain>
    </source>
</reference>